<comment type="catalytic activity">
    <reaction>
        <text>ATP + H2O = ADP + phosphate + H(+)</text>
        <dbReference type="Rhea" id="RHEA:13065"/>
        <dbReference type="ChEBI" id="CHEBI:15377"/>
        <dbReference type="ChEBI" id="CHEBI:15378"/>
        <dbReference type="ChEBI" id="CHEBI:30616"/>
        <dbReference type="ChEBI" id="CHEBI:43474"/>
        <dbReference type="ChEBI" id="CHEBI:456216"/>
        <dbReference type="EC" id="3.6.4.13"/>
    </reaction>
</comment>
<comment type="domain">
    <text>The Q motif is unique to and characteristic of the DEAD box family of RNA helicases and controls ATP binding and hydrolysis.</text>
</comment>
<comment type="similarity">
    <text evidence="4">Belongs to the DEAD box helicase family.</text>
</comment>
<comment type="sequence caution" evidence="4">
    <conflict type="erroneous initiation">
        <sequence resource="EMBL-CDS" id="BAD61516"/>
    </conflict>
</comment>
<evidence type="ECO:0000255" key="1">
    <source>
        <dbReference type="PROSITE-ProRule" id="PRU00541"/>
    </source>
</evidence>
<evidence type="ECO:0000255" key="2">
    <source>
        <dbReference type="PROSITE-ProRule" id="PRU00542"/>
    </source>
</evidence>
<evidence type="ECO:0000256" key="3">
    <source>
        <dbReference type="SAM" id="MobiDB-lite"/>
    </source>
</evidence>
<evidence type="ECO:0000305" key="4"/>
<evidence type="ECO:0000312" key="5">
    <source>
        <dbReference type="EMBL" id="EEE54998.1"/>
    </source>
</evidence>
<proteinExistence type="evidence at transcript level"/>
<name>RH26_ORYSJ</name>
<organism>
    <name type="scientific">Oryza sativa subsp. japonica</name>
    <name type="common">Rice</name>
    <dbReference type="NCBI Taxonomy" id="39947"/>
    <lineage>
        <taxon>Eukaryota</taxon>
        <taxon>Viridiplantae</taxon>
        <taxon>Streptophyta</taxon>
        <taxon>Embryophyta</taxon>
        <taxon>Tracheophyta</taxon>
        <taxon>Spermatophyta</taxon>
        <taxon>Magnoliopsida</taxon>
        <taxon>Liliopsida</taxon>
        <taxon>Poales</taxon>
        <taxon>Poaceae</taxon>
        <taxon>BOP clade</taxon>
        <taxon>Oryzoideae</taxon>
        <taxon>Oryzeae</taxon>
        <taxon>Oryzinae</taxon>
        <taxon>Oryza</taxon>
        <taxon>Oryza sativa</taxon>
    </lineage>
</organism>
<reference key="1">
    <citation type="journal article" date="2002" name="Nature">
        <title>The genome sequence and structure of rice chromosome 1.</title>
        <authorList>
            <person name="Sasaki T."/>
            <person name="Matsumoto T."/>
            <person name="Yamamoto K."/>
            <person name="Sakata K."/>
            <person name="Baba T."/>
            <person name="Katayose Y."/>
            <person name="Wu J."/>
            <person name="Niimura Y."/>
            <person name="Cheng Z."/>
            <person name="Nagamura Y."/>
            <person name="Antonio B.A."/>
            <person name="Kanamori H."/>
            <person name="Hosokawa S."/>
            <person name="Masukawa M."/>
            <person name="Arikawa K."/>
            <person name="Chiden Y."/>
            <person name="Hayashi M."/>
            <person name="Okamoto M."/>
            <person name="Ando T."/>
            <person name="Aoki H."/>
            <person name="Arita K."/>
            <person name="Hamada M."/>
            <person name="Harada C."/>
            <person name="Hijishita S."/>
            <person name="Honda M."/>
            <person name="Ichikawa Y."/>
            <person name="Idonuma A."/>
            <person name="Iijima M."/>
            <person name="Ikeda M."/>
            <person name="Ikeno M."/>
            <person name="Ito S."/>
            <person name="Ito T."/>
            <person name="Ito Y."/>
            <person name="Ito Y."/>
            <person name="Iwabuchi A."/>
            <person name="Kamiya K."/>
            <person name="Karasawa W."/>
            <person name="Katagiri S."/>
            <person name="Kikuta A."/>
            <person name="Kobayashi N."/>
            <person name="Kono I."/>
            <person name="Machita K."/>
            <person name="Maehara T."/>
            <person name="Mizuno H."/>
            <person name="Mizubayashi T."/>
            <person name="Mukai Y."/>
            <person name="Nagasaki H."/>
            <person name="Nakashima M."/>
            <person name="Nakama Y."/>
            <person name="Nakamichi Y."/>
            <person name="Nakamura M."/>
            <person name="Namiki N."/>
            <person name="Negishi M."/>
            <person name="Ohta I."/>
            <person name="Ono N."/>
            <person name="Saji S."/>
            <person name="Sakai K."/>
            <person name="Shibata M."/>
            <person name="Shimokawa T."/>
            <person name="Shomura A."/>
            <person name="Song J."/>
            <person name="Takazaki Y."/>
            <person name="Terasawa K."/>
            <person name="Tsuji K."/>
            <person name="Waki K."/>
            <person name="Yamagata H."/>
            <person name="Yamane H."/>
            <person name="Yoshiki S."/>
            <person name="Yoshihara R."/>
            <person name="Yukawa K."/>
            <person name="Zhong H."/>
            <person name="Iwama H."/>
            <person name="Endo T."/>
            <person name="Ito H."/>
            <person name="Hahn J.H."/>
            <person name="Kim H.-I."/>
            <person name="Eun M.-Y."/>
            <person name="Yano M."/>
            <person name="Jiang J."/>
            <person name="Gojobori T."/>
        </authorList>
    </citation>
    <scope>NUCLEOTIDE SEQUENCE [LARGE SCALE GENOMIC DNA]</scope>
    <source>
        <strain>cv. Nipponbare</strain>
    </source>
</reference>
<reference key="2">
    <citation type="journal article" date="2005" name="Nature">
        <title>The map-based sequence of the rice genome.</title>
        <authorList>
            <consortium name="International rice genome sequencing project (IRGSP)"/>
        </authorList>
    </citation>
    <scope>NUCLEOTIDE SEQUENCE [LARGE SCALE GENOMIC DNA]</scope>
    <source>
        <strain>cv. Nipponbare</strain>
    </source>
</reference>
<reference key="3">
    <citation type="journal article" date="2008" name="Nucleic Acids Res.">
        <title>The rice annotation project database (RAP-DB): 2008 update.</title>
        <authorList>
            <consortium name="The rice annotation project (RAP)"/>
        </authorList>
    </citation>
    <scope>GENOME REANNOTATION</scope>
    <source>
        <strain>cv. Nipponbare</strain>
    </source>
</reference>
<reference key="4">
    <citation type="journal article" date="2013" name="Rice">
        <title>Improvement of the Oryza sativa Nipponbare reference genome using next generation sequence and optical map data.</title>
        <authorList>
            <person name="Kawahara Y."/>
            <person name="de la Bastide M."/>
            <person name="Hamilton J.P."/>
            <person name="Kanamori H."/>
            <person name="McCombie W.R."/>
            <person name="Ouyang S."/>
            <person name="Schwartz D.C."/>
            <person name="Tanaka T."/>
            <person name="Wu J."/>
            <person name="Zhou S."/>
            <person name="Childs K.L."/>
            <person name="Davidson R.M."/>
            <person name="Lin H."/>
            <person name="Quesada-Ocampo L."/>
            <person name="Vaillancourt B."/>
            <person name="Sakai H."/>
            <person name="Lee S.S."/>
            <person name="Kim J."/>
            <person name="Numa H."/>
            <person name="Itoh T."/>
            <person name="Buell C.R."/>
            <person name="Matsumoto T."/>
        </authorList>
    </citation>
    <scope>GENOME REANNOTATION</scope>
    <source>
        <strain>cv. Nipponbare</strain>
    </source>
</reference>
<reference key="5">
    <citation type="journal article" date="2005" name="PLoS Biol.">
        <title>The genomes of Oryza sativa: a history of duplications.</title>
        <authorList>
            <person name="Yu J."/>
            <person name="Wang J."/>
            <person name="Lin W."/>
            <person name="Li S."/>
            <person name="Li H."/>
            <person name="Zhou J."/>
            <person name="Ni P."/>
            <person name="Dong W."/>
            <person name="Hu S."/>
            <person name="Zeng C."/>
            <person name="Zhang J."/>
            <person name="Zhang Y."/>
            <person name="Li R."/>
            <person name="Xu Z."/>
            <person name="Li S."/>
            <person name="Li X."/>
            <person name="Zheng H."/>
            <person name="Cong L."/>
            <person name="Lin L."/>
            <person name="Yin J."/>
            <person name="Geng J."/>
            <person name="Li G."/>
            <person name="Shi J."/>
            <person name="Liu J."/>
            <person name="Lv H."/>
            <person name="Li J."/>
            <person name="Wang J."/>
            <person name="Deng Y."/>
            <person name="Ran L."/>
            <person name="Shi X."/>
            <person name="Wang X."/>
            <person name="Wu Q."/>
            <person name="Li C."/>
            <person name="Ren X."/>
            <person name="Wang J."/>
            <person name="Wang X."/>
            <person name="Li D."/>
            <person name="Liu D."/>
            <person name="Zhang X."/>
            <person name="Ji Z."/>
            <person name="Zhao W."/>
            <person name="Sun Y."/>
            <person name="Zhang Z."/>
            <person name="Bao J."/>
            <person name="Han Y."/>
            <person name="Dong L."/>
            <person name="Ji J."/>
            <person name="Chen P."/>
            <person name="Wu S."/>
            <person name="Liu J."/>
            <person name="Xiao Y."/>
            <person name="Bu D."/>
            <person name="Tan J."/>
            <person name="Yang L."/>
            <person name="Ye C."/>
            <person name="Zhang J."/>
            <person name="Xu J."/>
            <person name="Zhou Y."/>
            <person name="Yu Y."/>
            <person name="Zhang B."/>
            <person name="Zhuang S."/>
            <person name="Wei H."/>
            <person name="Liu B."/>
            <person name="Lei M."/>
            <person name="Yu H."/>
            <person name="Li Y."/>
            <person name="Xu H."/>
            <person name="Wei S."/>
            <person name="He X."/>
            <person name="Fang L."/>
            <person name="Zhang Z."/>
            <person name="Zhang Y."/>
            <person name="Huang X."/>
            <person name="Su Z."/>
            <person name="Tong W."/>
            <person name="Li J."/>
            <person name="Tong Z."/>
            <person name="Li S."/>
            <person name="Ye J."/>
            <person name="Wang L."/>
            <person name="Fang L."/>
            <person name="Lei T."/>
            <person name="Chen C.-S."/>
            <person name="Chen H.-C."/>
            <person name="Xu Z."/>
            <person name="Li H."/>
            <person name="Huang H."/>
            <person name="Zhang F."/>
            <person name="Xu H."/>
            <person name="Li N."/>
            <person name="Zhao C."/>
            <person name="Li S."/>
            <person name="Dong L."/>
            <person name="Huang Y."/>
            <person name="Li L."/>
            <person name="Xi Y."/>
            <person name="Qi Q."/>
            <person name="Li W."/>
            <person name="Zhang B."/>
            <person name="Hu W."/>
            <person name="Zhang Y."/>
            <person name="Tian X."/>
            <person name="Jiao Y."/>
            <person name="Liang X."/>
            <person name="Jin J."/>
            <person name="Gao L."/>
            <person name="Zheng W."/>
            <person name="Hao B."/>
            <person name="Liu S.-M."/>
            <person name="Wang W."/>
            <person name="Yuan L."/>
            <person name="Cao M."/>
            <person name="McDermott J."/>
            <person name="Samudrala R."/>
            <person name="Wang J."/>
            <person name="Wong G.K.-S."/>
            <person name="Yang H."/>
        </authorList>
    </citation>
    <scope>NUCLEOTIDE SEQUENCE [LARGE SCALE GENOMIC DNA]</scope>
    <source>
        <strain>cv. Nipponbare</strain>
    </source>
</reference>
<reference key="6">
    <citation type="journal article" date="2003" name="Science">
        <title>Collection, mapping, and annotation of over 28,000 cDNA clones from japonica rice.</title>
        <authorList>
            <consortium name="The rice full-length cDNA consortium"/>
        </authorList>
    </citation>
    <scope>NUCLEOTIDE SEQUENCE [LARGE SCALE MRNA]</scope>
    <source>
        <strain>cv. Nipponbare</strain>
    </source>
</reference>
<gene>
    <name type="ordered locus">Os01g0618500</name>
    <name type="ordered locus">LOC_Os01g43130</name>
    <name type="ORF">B1040D09.7</name>
    <name evidence="5" type="ORF">OsJ_02629</name>
</gene>
<feature type="chain" id="PRO_0000282513" description="DEAD-box ATP-dependent RNA helicase 26">
    <location>
        <begin position="1"/>
        <end position="536"/>
    </location>
</feature>
<feature type="domain" description="Helicase ATP-binding" evidence="1">
    <location>
        <begin position="105"/>
        <end position="282"/>
    </location>
</feature>
<feature type="domain" description="Helicase C-terminal" evidence="2">
    <location>
        <begin position="316"/>
        <end position="466"/>
    </location>
</feature>
<feature type="region of interest" description="Disordered" evidence="3">
    <location>
        <begin position="1"/>
        <end position="44"/>
    </location>
</feature>
<feature type="short sequence motif" description="Q motif">
    <location>
        <begin position="74"/>
        <end position="102"/>
    </location>
</feature>
<feature type="short sequence motif" description="DEAD box">
    <location>
        <begin position="230"/>
        <end position="233"/>
    </location>
</feature>
<feature type="compositionally biased region" description="Basic residues" evidence="3">
    <location>
        <begin position="11"/>
        <end position="20"/>
    </location>
</feature>
<feature type="binding site" evidence="1">
    <location>
        <begin position="118"/>
        <end position="125"/>
    </location>
    <ligand>
        <name>ATP</name>
        <dbReference type="ChEBI" id="CHEBI:30616"/>
    </ligand>
</feature>
<feature type="sequence conflict" description="In Ref. 6; AK067476." evidence="4" ref="6">
    <original>S</original>
    <variation>W</variation>
    <location>
        <position position="272"/>
    </location>
</feature>
<protein>
    <recommendedName>
        <fullName>DEAD-box ATP-dependent RNA helicase 26</fullName>
        <ecNumber>3.6.4.13</ecNumber>
    </recommendedName>
</protein>
<accession>Q0JL73</accession>
<accession>B9EY35</accession>
<accession>Q5ZBH4</accession>
<sequence length="536" mass="58849">MMSGGPSDATHRKRRRRRGPKGSGVDGPSIPRAVTTNGAGPEEEEVVEGKAMELDAGMSAAEVGGVVGSHLSETRFDQCPVSPLSLKAIKDAGYEKMTQVQEATLPIILQGEDVLAKAKTGTGKTVAFLLPAIELLSTLPRSPSINLLVICPTRELANQVAAEARKLLKYHRSLGVQVVIGGTKLPQEQRSMQSNPCQILVATPGRLKDHLENTPGFSNRIKGVKVLVLDEADRLLDMGFRRDIEKIIAFIPKERQTLLFSATVPEEVRQISHIAMKRGYKFINTVKEGDEETHSQVSQMYMVAPLDLHFSILYNVLKKHIAEDADYKVIVFCTTAMVTKLVAEVLSQLKLNIREIHSRKSQSARTKVSDEFRKSKGLILVSSDVSARGVDYPDVTLVIQVGLPADREQYIHRLGRTGRKGKDGLGLLLLAPWETYFLNSVQDLSVSQAVVPTIDSSIQTGVKDALGRVETKSKESAYQAWLGYYNSNKAISRDKSRLVRLAEEFSQSMGLAIPPAIPKLILRKMGLNNVPGLRSV</sequence>
<dbReference type="EC" id="3.6.4.13"/>
<dbReference type="EMBL" id="AP003328">
    <property type="protein sequence ID" value="BAD61516.1"/>
    <property type="status" value="ALT_INIT"/>
    <property type="molecule type" value="Genomic_DNA"/>
</dbReference>
<dbReference type="EMBL" id="AP008207">
    <property type="protein sequence ID" value="BAF05505.1"/>
    <property type="molecule type" value="Genomic_DNA"/>
</dbReference>
<dbReference type="EMBL" id="AP014957">
    <property type="protein sequence ID" value="BAS73191.1"/>
    <property type="molecule type" value="Genomic_DNA"/>
</dbReference>
<dbReference type="EMBL" id="CM000138">
    <property type="protein sequence ID" value="EEE54998.1"/>
    <property type="molecule type" value="Genomic_DNA"/>
</dbReference>
<dbReference type="EMBL" id="AK067476">
    <property type="status" value="NOT_ANNOTATED_CDS"/>
    <property type="molecule type" value="mRNA"/>
</dbReference>
<dbReference type="RefSeq" id="XP_015621603.1">
    <property type="nucleotide sequence ID" value="XM_015766117.1"/>
</dbReference>
<dbReference type="SMR" id="Q0JL73"/>
<dbReference type="FunCoup" id="Q0JL73">
    <property type="interactions" value="59"/>
</dbReference>
<dbReference type="STRING" id="39947.Q0JL73"/>
<dbReference type="PaxDb" id="39947-Q0JL73"/>
<dbReference type="EnsemblPlants" id="Os01t0618500-01">
    <property type="protein sequence ID" value="Os01t0618500-01"/>
    <property type="gene ID" value="Os01g0618500"/>
</dbReference>
<dbReference type="Gramene" id="Os01t0618500-01">
    <property type="protein sequence ID" value="Os01t0618500-01"/>
    <property type="gene ID" value="Os01g0618500"/>
</dbReference>
<dbReference type="KEGG" id="dosa:Os01g0618500"/>
<dbReference type="eggNOG" id="KOG0342">
    <property type="taxonomic scope" value="Eukaryota"/>
</dbReference>
<dbReference type="HOGENOM" id="CLU_003041_26_6_1"/>
<dbReference type="InParanoid" id="Q0JL73"/>
<dbReference type="OMA" id="YVEVDCI"/>
<dbReference type="OrthoDB" id="193716at2759"/>
<dbReference type="Proteomes" id="UP000000763">
    <property type="component" value="Chromosome 1"/>
</dbReference>
<dbReference type="Proteomes" id="UP000007752">
    <property type="component" value="Chromosome 1"/>
</dbReference>
<dbReference type="Proteomes" id="UP000059680">
    <property type="component" value="Chromosome 1"/>
</dbReference>
<dbReference type="GO" id="GO:0005524">
    <property type="term" value="F:ATP binding"/>
    <property type="evidence" value="ECO:0007669"/>
    <property type="project" value="UniProtKB-KW"/>
</dbReference>
<dbReference type="GO" id="GO:0016887">
    <property type="term" value="F:ATP hydrolysis activity"/>
    <property type="evidence" value="ECO:0007669"/>
    <property type="project" value="RHEA"/>
</dbReference>
<dbReference type="GO" id="GO:0003723">
    <property type="term" value="F:RNA binding"/>
    <property type="evidence" value="ECO:0007669"/>
    <property type="project" value="UniProtKB-KW"/>
</dbReference>
<dbReference type="GO" id="GO:0003724">
    <property type="term" value="F:RNA helicase activity"/>
    <property type="evidence" value="ECO:0007669"/>
    <property type="project" value="UniProtKB-EC"/>
</dbReference>
<dbReference type="CDD" id="cd17964">
    <property type="entry name" value="DEADc_MSS116"/>
    <property type="match status" value="1"/>
</dbReference>
<dbReference type="CDD" id="cd18787">
    <property type="entry name" value="SF2_C_DEAD"/>
    <property type="match status" value="1"/>
</dbReference>
<dbReference type="Gene3D" id="3.40.50.300">
    <property type="entry name" value="P-loop containing nucleotide triphosphate hydrolases"/>
    <property type="match status" value="2"/>
</dbReference>
<dbReference type="InterPro" id="IPR011545">
    <property type="entry name" value="DEAD/DEAH_box_helicase_dom"/>
</dbReference>
<dbReference type="InterPro" id="IPR014001">
    <property type="entry name" value="Helicase_ATP-bd"/>
</dbReference>
<dbReference type="InterPro" id="IPR001650">
    <property type="entry name" value="Helicase_C-like"/>
</dbReference>
<dbReference type="InterPro" id="IPR027417">
    <property type="entry name" value="P-loop_NTPase"/>
</dbReference>
<dbReference type="InterPro" id="IPR000629">
    <property type="entry name" value="RNA-helicase_DEAD-box_CS"/>
</dbReference>
<dbReference type="InterPro" id="IPR014014">
    <property type="entry name" value="RNA_helicase_DEAD_Q_motif"/>
</dbReference>
<dbReference type="PANTHER" id="PTHR24031">
    <property type="entry name" value="RNA HELICASE"/>
    <property type="match status" value="1"/>
</dbReference>
<dbReference type="Pfam" id="PF00270">
    <property type="entry name" value="DEAD"/>
    <property type="match status" value="1"/>
</dbReference>
<dbReference type="Pfam" id="PF00271">
    <property type="entry name" value="Helicase_C"/>
    <property type="match status" value="1"/>
</dbReference>
<dbReference type="SMART" id="SM00487">
    <property type="entry name" value="DEXDc"/>
    <property type="match status" value="1"/>
</dbReference>
<dbReference type="SMART" id="SM00490">
    <property type="entry name" value="HELICc"/>
    <property type="match status" value="1"/>
</dbReference>
<dbReference type="SUPFAM" id="SSF52540">
    <property type="entry name" value="P-loop containing nucleoside triphosphate hydrolases"/>
    <property type="match status" value="1"/>
</dbReference>
<dbReference type="PROSITE" id="PS00039">
    <property type="entry name" value="DEAD_ATP_HELICASE"/>
    <property type="match status" value="1"/>
</dbReference>
<dbReference type="PROSITE" id="PS51192">
    <property type="entry name" value="HELICASE_ATP_BIND_1"/>
    <property type="match status" value="1"/>
</dbReference>
<dbReference type="PROSITE" id="PS51194">
    <property type="entry name" value="HELICASE_CTER"/>
    <property type="match status" value="1"/>
</dbReference>
<dbReference type="PROSITE" id="PS51195">
    <property type="entry name" value="Q_MOTIF"/>
    <property type="match status" value="1"/>
</dbReference>
<keyword id="KW-0067">ATP-binding</keyword>
<keyword id="KW-0347">Helicase</keyword>
<keyword id="KW-0378">Hydrolase</keyword>
<keyword id="KW-0547">Nucleotide-binding</keyword>
<keyword id="KW-1185">Reference proteome</keyword>
<keyword id="KW-0694">RNA-binding</keyword>